<comment type="function">
    <text evidence="1">The UvrABC repair system catalyzes the recognition and processing of DNA lesions. UvrA is an ATPase and a DNA-binding protein. A damage recognition complex composed of 2 UvrA and 2 UvrB subunits scans DNA for abnormalities. When the presence of a lesion has been verified by UvrB, the UvrA molecules dissociate.</text>
</comment>
<comment type="subunit">
    <text evidence="1">Forms a heterotetramer with UvrB during the search for lesions.</text>
</comment>
<comment type="subcellular location">
    <subcellularLocation>
        <location evidence="1">Cytoplasm</location>
    </subcellularLocation>
</comment>
<comment type="similarity">
    <text evidence="1">Belongs to the ABC transporter superfamily. UvrA family.</text>
</comment>
<feature type="chain" id="PRO_0000093117" description="UvrABC system protein A">
    <location>
        <begin position="1"/>
        <end position="988"/>
    </location>
</feature>
<feature type="domain" description="ABC transporter 1" evidence="1">
    <location>
        <begin position="312"/>
        <end position="589"/>
    </location>
</feature>
<feature type="domain" description="ABC transporter 2" evidence="1">
    <location>
        <begin position="609"/>
        <end position="938"/>
    </location>
</feature>
<feature type="zinc finger region" description="C4-type" evidence="1">
    <location>
        <begin position="255"/>
        <end position="282"/>
    </location>
</feature>
<feature type="zinc finger region" description="C4-type" evidence="1">
    <location>
        <begin position="741"/>
        <end position="767"/>
    </location>
</feature>
<feature type="region of interest" description="Disordered" evidence="2">
    <location>
        <begin position="948"/>
        <end position="988"/>
    </location>
</feature>
<feature type="compositionally biased region" description="Basic and acidic residues" evidence="2">
    <location>
        <begin position="958"/>
        <end position="972"/>
    </location>
</feature>
<feature type="compositionally biased region" description="Basic residues" evidence="2">
    <location>
        <begin position="978"/>
        <end position="988"/>
    </location>
</feature>
<feature type="binding site" evidence="1">
    <location>
        <begin position="33"/>
        <end position="40"/>
    </location>
    <ligand>
        <name>ATP</name>
        <dbReference type="ChEBI" id="CHEBI:30616"/>
    </ligand>
</feature>
<feature type="binding site" evidence="1">
    <location>
        <begin position="642"/>
        <end position="649"/>
    </location>
    <ligand>
        <name>ATP</name>
        <dbReference type="ChEBI" id="CHEBI:30616"/>
    </ligand>
</feature>
<gene>
    <name evidence="1" type="primary">uvrA</name>
    <name type="synonym">uvrA1</name>
    <name type="ordered locus">XCC1148</name>
</gene>
<reference key="1">
    <citation type="journal article" date="2002" name="Nature">
        <title>Comparison of the genomes of two Xanthomonas pathogens with differing host specificities.</title>
        <authorList>
            <person name="da Silva A.C.R."/>
            <person name="Ferro J.A."/>
            <person name="Reinach F.C."/>
            <person name="Farah C.S."/>
            <person name="Furlan L.R."/>
            <person name="Quaggio R.B."/>
            <person name="Monteiro-Vitorello C.B."/>
            <person name="Van Sluys M.A."/>
            <person name="Almeida N.F. Jr."/>
            <person name="Alves L.M.C."/>
            <person name="do Amaral A.M."/>
            <person name="Bertolini M.C."/>
            <person name="Camargo L.E.A."/>
            <person name="Camarotte G."/>
            <person name="Cannavan F."/>
            <person name="Cardozo J."/>
            <person name="Chambergo F."/>
            <person name="Ciapina L.P."/>
            <person name="Cicarelli R.M.B."/>
            <person name="Coutinho L.L."/>
            <person name="Cursino-Santos J.R."/>
            <person name="El-Dorry H."/>
            <person name="Faria J.B."/>
            <person name="Ferreira A.J.S."/>
            <person name="Ferreira R.C.C."/>
            <person name="Ferro M.I.T."/>
            <person name="Formighieri E.F."/>
            <person name="Franco M.C."/>
            <person name="Greggio C.C."/>
            <person name="Gruber A."/>
            <person name="Katsuyama A.M."/>
            <person name="Kishi L.T."/>
            <person name="Leite R.P."/>
            <person name="Lemos E.G.M."/>
            <person name="Lemos M.V.F."/>
            <person name="Locali E.C."/>
            <person name="Machado M.A."/>
            <person name="Madeira A.M.B.N."/>
            <person name="Martinez-Rossi N.M."/>
            <person name="Martins E.C."/>
            <person name="Meidanis J."/>
            <person name="Menck C.F.M."/>
            <person name="Miyaki C.Y."/>
            <person name="Moon D.H."/>
            <person name="Moreira L.M."/>
            <person name="Novo M.T.M."/>
            <person name="Okura V.K."/>
            <person name="Oliveira M.C."/>
            <person name="Oliveira V.R."/>
            <person name="Pereira H.A."/>
            <person name="Rossi A."/>
            <person name="Sena J.A.D."/>
            <person name="Silva C."/>
            <person name="de Souza R.F."/>
            <person name="Spinola L.A.F."/>
            <person name="Takita M.A."/>
            <person name="Tamura R.E."/>
            <person name="Teixeira E.C."/>
            <person name="Tezza R.I.D."/>
            <person name="Trindade dos Santos M."/>
            <person name="Truffi D."/>
            <person name="Tsai S.M."/>
            <person name="White F.F."/>
            <person name="Setubal J.C."/>
            <person name="Kitajima J.P."/>
        </authorList>
    </citation>
    <scope>NUCLEOTIDE SEQUENCE [LARGE SCALE GENOMIC DNA]</scope>
    <source>
        <strain>ATCC 33913 / DSM 3586 / NCPPB 528 / LMG 568 / P 25</strain>
    </source>
</reference>
<proteinExistence type="inferred from homology"/>
<evidence type="ECO:0000255" key="1">
    <source>
        <dbReference type="HAMAP-Rule" id="MF_00205"/>
    </source>
</evidence>
<evidence type="ECO:0000256" key="2">
    <source>
        <dbReference type="SAM" id="MobiDB-lite"/>
    </source>
</evidence>
<dbReference type="EMBL" id="AE008922">
    <property type="protein sequence ID" value="AAM40447.1"/>
    <property type="molecule type" value="Genomic_DNA"/>
</dbReference>
<dbReference type="RefSeq" id="NP_636523.1">
    <property type="nucleotide sequence ID" value="NC_003902.1"/>
</dbReference>
<dbReference type="RefSeq" id="WP_011036348.1">
    <property type="nucleotide sequence ID" value="NC_003902.1"/>
</dbReference>
<dbReference type="SMR" id="Q8PBH3"/>
<dbReference type="STRING" id="190485.XCC1148"/>
<dbReference type="EnsemblBacteria" id="AAM40447">
    <property type="protein sequence ID" value="AAM40447"/>
    <property type="gene ID" value="XCC1148"/>
</dbReference>
<dbReference type="KEGG" id="xcc:XCC1148"/>
<dbReference type="PATRIC" id="fig|190485.4.peg.1228"/>
<dbReference type="eggNOG" id="COG0178">
    <property type="taxonomic scope" value="Bacteria"/>
</dbReference>
<dbReference type="HOGENOM" id="CLU_001370_0_2_6"/>
<dbReference type="OrthoDB" id="9809851at2"/>
<dbReference type="Proteomes" id="UP000001010">
    <property type="component" value="Chromosome"/>
</dbReference>
<dbReference type="GO" id="GO:0005737">
    <property type="term" value="C:cytoplasm"/>
    <property type="evidence" value="ECO:0007669"/>
    <property type="project" value="UniProtKB-SubCell"/>
</dbReference>
<dbReference type="GO" id="GO:0009380">
    <property type="term" value="C:excinuclease repair complex"/>
    <property type="evidence" value="ECO:0007669"/>
    <property type="project" value="InterPro"/>
</dbReference>
<dbReference type="GO" id="GO:0005524">
    <property type="term" value="F:ATP binding"/>
    <property type="evidence" value="ECO:0007669"/>
    <property type="project" value="UniProtKB-UniRule"/>
</dbReference>
<dbReference type="GO" id="GO:0016887">
    <property type="term" value="F:ATP hydrolysis activity"/>
    <property type="evidence" value="ECO:0007669"/>
    <property type="project" value="InterPro"/>
</dbReference>
<dbReference type="GO" id="GO:0003677">
    <property type="term" value="F:DNA binding"/>
    <property type="evidence" value="ECO:0007669"/>
    <property type="project" value="UniProtKB-UniRule"/>
</dbReference>
<dbReference type="GO" id="GO:0009381">
    <property type="term" value="F:excinuclease ABC activity"/>
    <property type="evidence" value="ECO:0007669"/>
    <property type="project" value="UniProtKB-UniRule"/>
</dbReference>
<dbReference type="GO" id="GO:0008270">
    <property type="term" value="F:zinc ion binding"/>
    <property type="evidence" value="ECO:0007669"/>
    <property type="project" value="UniProtKB-UniRule"/>
</dbReference>
<dbReference type="GO" id="GO:0006289">
    <property type="term" value="P:nucleotide-excision repair"/>
    <property type="evidence" value="ECO:0007669"/>
    <property type="project" value="UniProtKB-UniRule"/>
</dbReference>
<dbReference type="GO" id="GO:0009432">
    <property type="term" value="P:SOS response"/>
    <property type="evidence" value="ECO:0007669"/>
    <property type="project" value="UniProtKB-UniRule"/>
</dbReference>
<dbReference type="CDD" id="cd03270">
    <property type="entry name" value="ABC_UvrA_I"/>
    <property type="match status" value="1"/>
</dbReference>
<dbReference type="CDD" id="cd03271">
    <property type="entry name" value="ABC_UvrA_II"/>
    <property type="match status" value="1"/>
</dbReference>
<dbReference type="FunFam" id="1.10.8.280:FF:000001">
    <property type="entry name" value="UvrABC system protein A"/>
    <property type="match status" value="1"/>
</dbReference>
<dbReference type="FunFam" id="1.20.1580.10:FF:000002">
    <property type="entry name" value="UvrABC system protein A"/>
    <property type="match status" value="1"/>
</dbReference>
<dbReference type="Gene3D" id="3.30.190.20">
    <property type="match status" value="1"/>
</dbReference>
<dbReference type="Gene3D" id="1.10.8.280">
    <property type="entry name" value="ABC transporter ATPase domain-like"/>
    <property type="match status" value="1"/>
</dbReference>
<dbReference type="Gene3D" id="1.20.1580.10">
    <property type="entry name" value="ABC transporter ATPase like domain"/>
    <property type="match status" value="3"/>
</dbReference>
<dbReference type="Gene3D" id="3.40.50.300">
    <property type="entry name" value="P-loop containing nucleotide triphosphate hydrolases"/>
    <property type="match status" value="3"/>
</dbReference>
<dbReference type="HAMAP" id="MF_00205">
    <property type="entry name" value="UvrA"/>
    <property type="match status" value="1"/>
</dbReference>
<dbReference type="InterPro" id="IPR003439">
    <property type="entry name" value="ABC_transporter-like_ATP-bd"/>
</dbReference>
<dbReference type="InterPro" id="IPR017871">
    <property type="entry name" value="ABC_transporter-like_CS"/>
</dbReference>
<dbReference type="InterPro" id="IPR027417">
    <property type="entry name" value="P-loop_NTPase"/>
</dbReference>
<dbReference type="InterPro" id="IPR004602">
    <property type="entry name" value="UvrA"/>
</dbReference>
<dbReference type="InterPro" id="IPR041552">
    <property type="entry name" value="UvrA_DNA-bd"/>
</dbReference>
<dbReference type="InterPro" id="IPR041102">
    <property type="entry name" value="UvrA_inter"/>
</dbReference>
<dbReference type="NCBIfam" id="NF001503">
    <property type="entry name" value="PRK00349.1"/>
    <property type="match status" value="1"/>
</dbReference>
<dbReference type="NCBIfam" id="TIGR00630">
    <property type="entry name" value="uvra"/>
    <property type="match status" value="1"/>
</dbReference>
<dbReference type="PANTHER" id="PTHR43152">
    <property type="entry name" value="UVRABC SYSTEM PROTEIN A"/>
    <property type="match status" value="1"/>
</dbReference>
<dbReference type="PANTHER" id="PTHR43152:SF3">
    <property type="entry name" value="UVRABC SYSTEM PROTEIN A"/>
    <property type="match status" value="1"/>
</dbReference>
<dbReference type="Pfam" id="PF17755">
    <property type="entry name" value="UvrA_DNA-bind"/>
    <property type="match status" value="1"/>
</dbReference>
<dbReference type="Pfam" id="PF17760">
    <property type="entry name" value="UvrA_inter"/>
    <property type="match status" value="1"/>
</dbReference>
<dbReference type="SUPFAM" id="SSF52540">
    <property type="entry name" value="P-loop containing nucleoside triphosphate hydrolases"/>
    <property type="match status" value="2"/>
</dbReference>
<dbReference type="PROSITE" id="PS00211">
    <property type="entry name" value="ABC_TRANSPORTER_1"/>
    <property type="match status" value="2"/>
</dbReference>
<dbReference type="PROSITE" id="PS50893">
    <property type="entry name" value="ABC_TRANSPORTER_2"/>
    <property type="match status" value="1"/>
</dbReference>
<protein>
    <recommendedName>
        <fullName evidence="1">UvrABC system protein A</fullName>
        <shortName evidence="1">UvrA protein</shortName>
    </recommendedName>
    <alternativeName>
        <fullName evidence="1">Excinuclease ABC subunit A</fullName>
    </alternativeName>
</protein>
<organism>
    <name type="scientific">Xanthomonas campestris pv. campestris (strain ATCC 33913 / DSM 3586 / NCPPB 528 / LMG 568 / P 25)</name>
    <dbReference type="NCBI Taxonomy" id="190485"/>
    <lineage>
        <taxon>Bacteria</taxon>
        <taxon>Pseudomonadati</taxon>
        <taxon>Pseudomonadota</taxon>
        <taxon>Gammaproteobacteria</taxon>
        <taxon>Lysobacterales</taxon>
        <taxon>Lysobacteraceae</taxon>
        <taxon>Xanthomonas</taxon>
    </lineage>
</organism>
<sequence>MAMDFIRIRGARTHNLKNIDLDLPRDKLIVITGLSGSGKSSLAFDTIYAEGQRRYVESLSAYARQFLSVMEKPDLDHIEGLSPAISIEQKSTSHNPRSTVGTITEIYDYLRLLYARVGQPRCPDHGFPLEAQTVSQMVDHMLTLDPEQRYMLLAPVIRDRKGEHAQVFEQLRAQGFVRVRVDGELYEIDAVPPLALRQKHTIEAVIDRFRPREDIKQRLAESFETALKLGEGMVAVQSLDDATAAPHLFSSKYSCPVCDYSLPELEPRLFSFNAPVGACPSCDGLGVAEFFDPDRVVVHPELSLSAGAVRGWDRRNAYYFQLIASLAKHYKFDVDAVWNTLPAKVRQAVLFGSGDEVISFTYFTDAGGRTTRKHRFEGILPNLERRYRETESPAVREELTKYVSQQPCPACNGTRLNRAARNVFVADRPLPELVVLPVNEALNFFRGLSLPGWRGEIASKIVKEIGERLGFLVDVGLDYLTLERKADTLSGGEAQRIRLASQIGAGLVGVMYVLDEPSIGLHQRDNERLLGTLTRLRDLGNTVIVVEHDEDAIRLADHVLDIGPGAGVHGGEICAQGTLQDILESPRSLTGQYLSGKRRIEIPKQRHKPNPKMMLHLRGATGNNLKNVDLEIPAGLLTCITGVSGSGKSTLINDTLFTLAANEINGASHTVAPHREVENLDLFDKVVDIDQSPIGRTPRSNPATYTGMFTPLRELFAQVPESRARGYSPGRFSFNVRGGRCEACQGDGMIKVEMHFLPDVYVPCDVCHGKRYNRETLEIRYKGFNISDVLQMTVEDALRLFEPVPSIARKLETLVDVGLSYIKLGQSATTLSGGEAQRVKLSKELSRRDTGRTLYILDEPTTGLHFHDIEALLGVLHKLRDEGNTVVVIEHNLDVIKTADWIVDLGPEGGHRGGTILVSGTPEDVAAHKASYTGQFLAKMLPSVKARETRPAAMANKPDARPPRKVKPEKVAKATKTATKKTAKKKAS</sequence>
<accession>Q8PBH3</accession>
<name>UVRA_XANCP</name>
<keyword id="KW-0067">ATP-binding</keyword>
<keyword id="KW-0963">Cytoplasm</keyword>
<keyword id="KW-0227">DNA damage</keyword>
<keyword id="KW-0228">DNA excision</keyword>
<keyword id="KW-0234">DNA repair</keyword>
<keyword id="KW-0238">DNA-binding</keyword>
<keyword id="KW-0267">Excision nuclease</keyword>
<keyword id="KW-0479">Metal-binding</keyword>
<keyword id="KW-0547">Nucleotide-binding</keyword>
<keyword id="KW-1185">Reference proteome</keyword>
<keyword id="KW-0677">Repeat</keyword>
<keyword id="KW-0742">SOS response</keyword>
<keyword id="KW-0862">Zinc</keyword>
<keyword id="KW-0863">Zinc-finger</keyword>